<gene>
    <name evidence="1" type="primary">astE</name>
    <name type="ordered locus">SeSA_A1402</name>
</gene>
<protein>
    <recommendedName>
        <fullName evidence="1">Succinylglutamate desuccinylase</fullName>
        <ecNumber evidence="1">3.5.1.96</ecNumber>
    </recommendedName>
</protein>
<sequence>MDNFLALTLSGTTPRVTQGKGAGFRWRWLGHGLLELTPDAPVDRALILSAGIHGNETAPVEMLDKLLSALYSGSLTLTWRVLVVLGNPQALAAGIRYCHSDMNRMFGGRWQSFAESDETRRARELELSLETFFSSGQARVRWHLDLHTAIRGSHHLRFGVLPQRDRPWETDFLAWLGAAGLEALVFHQAPGGTFTHFSSEHFGALSCTLELGKALPFGQNDLTQFSITSQALSALLSGVEMSTSSSPPLRYRVVSQITRHSDKFTLYMDAQTLNFTAFAKGTLLAEEGDKRVTVTHDVEYVLFPNPSVACGLRAGLMLERLP</sequence>
<name>ASTE_SALSV</name>
<proteinExistence type="inferred from homology"/>
<organism>
    <name type="scientific">Salmonella schwarzengrund (strain CVM19633)</name>
    <dbReference type="NCBI Taxonomy" id="439843"/>
    <lineage>
        <taxon>Bacteria</taxon>
        <taxon>Pseudomonadati</taxon>
        <taxon>Pseudomonadota</taxon>
        <taxon>Gammaproteobacteria</taxon>
        <taxon>Enterobacterales</taxon>
        <taxon>Enterobacteriaceae</taxon>
        <taxon>Salmonella</taxon>
    </lineage>
</organism>
<keyword id="KW-0056">Arginine metabolism</keyword>
<keyword id="KW-0378">Hydrolase</keyword>
<keyword id="KW-0479">Metal-binding</keyword>
<keyword id="KW-0862">Zinc</keyword>
<reference key="1">
    <citation type="journal article" date="2011" name="J. Bacteriol.">
        <title>Comparative genomics of 28 Salmonella enterica isolates: evidence for CRISPR-mediated adaptive sublineage evolution.</title>
        <authorList>
            <person name="Fricke W.F."/>
            <person name="Mammel M.K."/>
            <person name="McDermott P.F."/>
            <person name="Tartera C."/>
            <person name="White D.G."/>
            <person name="Leclerc J.E."/>
            <person name="Ravel J."/>
            <person name="Cebula T.A."/>
        </authorList>
    </citation>
    <scope>NUCLEOTIDE SEQUENCE [LARGE SCALE GENOMIC DNA]</scope>
    <source>
        <strain>CVM19633</strain>
    </source>
</reference>
<feature type="chain" id="PRO_1000133645" description="Succinylglutamate desuccinylase">
    <location>
        <begin position="1"/>
        <end position="322"/>
    </location>
</feature>
<feature type="active site" evidence="1">
    <location>
        <position position="210"/>
    </location>
</feature>
<feature type="binding site" evidence="1">
    <location>
        <position position="53"/>
    </location>
    <ligand>
        <name>Zn(2+)</name>
        <dbReference type="ChEBI" id="CHEBI:29105"/>
    </ligand>
</feature>
<feature type="binding site" evidence="1">
    <location>
        <position position="56"/>
    </location>
    <ligand>
        <name>Zn(2+)</name>
        <dbReference type="ChEBI" id="CHEBI:29105"/>
    </ligand>
</feature>
<feature type="binding site" evidence="1">
    <location>
        <position position="147"/>
    </location>
    <ligand>
        <name>Zn(2+)</name>
        <dbReference type="ChEBI" id="CHEBI:29105"/>
    </ligand>
</feature>
<evidence type="ECO:0000255" key="1">
    <source>
        <dbReference type="HAMAP-Rule" id="MF_00767"/>
    </source>
</evidence>
<comment type="function">
    <text evidence="1">Transforms N(2)-succinylglutamate into succinate and glutamate.</text>
</comment>
<comment type="catalytic activity">
    <reaction evidence="1">
        <text>N-succinyl-L-glutamate + H2O = L-glutamate + succinate</text>
        <dbReference type="Rhea" id="RHEA:15169"/>
        <dbReference type="ChEBI" id="CHEBI:15377"/>
        <dbReference type="ChEBI" id="CHEBI:29985"/>
        <dbReference type="ChEBI" id="CHEBI:30031"/>
        <dbReference type="ChEBI" id="CHEBI:58763"/>
        <dbReference type="EC" id="3.5.1.96"/>
    </reaction>
</comment>
<comment type="cofactor">
    <cofactor evidence="1">
        <name>Zn(2+)</name>
        <dbReference type="ChEBI" id="CHEBI:29105"/>
    </cofactor>
    <text evidence="1">Binds 1 zinc ion per subunit.</text>
</comment>
<comment type="pathway">
    <text evidence="1">Amino-acid degradation; L-arginine degradation via AST pathway; L-glutamate and succinate from L-arginine: step 5/5.</text>
</comment>
<comment type="similarity">
    <text evidence="1">Belongs to the AspA/AstE family. Succinylglutamate desuccinylase subfamily.</text>
</comment>
<dbReference type="EC" id="3.5.1.96" evidence="1"/>
<dbReference type="EMBL" id="CP001127">
    <property type="protein sequence ID" value="ACF92351.1"/>
    <property type="molecule type" value="Genomic_DNA"/>
</dbReference>
<dbReference type="RefSeq" id="WP_000368453.1">
    <property type="nucleotide sequence ID" value="NC_011094.1"/>
</dbReference>
<dbReference type="SMR" id="B4TUC5"/>
<dbReference type="KEGG" id="sew:SeSA_A1402"/>
<dbReference type="HOGENOM" id="CLU_071608_0_0_6"/>
<dbReference type="UniPathway" id="UPA00185">
    <property type="reaction ID" value="UER00283"/>
</dbReference>
<dbReference type="Proteomes" id="UP000001865">
    <property type="component" value="Chromosome"/>
</dbReference>
<dbReference type="GO" id="GO:0016788">
    <property type="term" value="F:hydrolase activity, acting on ester bonds"/>
    <property type="evidence" value="ECO:0007669"/>
    <property type="project" value="UniProtKB-UniRule"/>
</dbReference>
<dbReference type="GO" id="GO:0009017">
    <property type="term" value="F:succinylglutamate desuccinylase activity"/>
    <property type="evidence" value="ECO:0007669"/>
    <property type="project" value="UniProtKB-EC"/>
</dbReference>
<dbReference type="GO" id="GO:0008270">
    <property type="term" value="F:zinc ion binding"/>
    <property type="evidence" value="ECO:0007669"/>
    <property type="project" value="UniProtKB-UniRule"/>
</dbReference>
<dbReference type="GO" id="GO:0019544">
    <property type="term" value="P:arginine catabolic process to glutamate"/>
    <property type="evidence" value="ECO:0007669"/>
    <property type="project" value="UniProtKB-UniRule"/>
</dbReference>
<dbReference type="GO" id="GO:0019545">
    <property type="term" value="P:arginine catabolic process to succinate"/>
    <property type="evidence" value="ECO:0007669"/>
    <property type="project" value="UniProtKB-UniRule"/>
</dbReference>
<dbReference type="CDD" id="cd03855">
    <property type="entry name" value="M14_ASTE"/>
    <property type="match status" value="1"/>
</dbReference>
<dbReference type="FunFam" id="3.40.630.10:FF:000017">
    <property type="entry name" value="Succinylglutamate desuccinylase"/>
    <property type="match status" value="1"/>
</dbReference>
<dbReference type="Gene3D" id="3.40.630.10">
    <property type="entry name" value="Zn peptidases"/>
    <property type="match status" value="1"/>
</dbReference>
<dbReference type="HAMAP" id="MF_00767">
    <property type="entry name" value="Arg_catab_AstE"/>
    <property type="match status" value="1"/>
</dbReference>
<dbReference type="InterPro" id="IPR050178">
    <property type="entry name" value="AspA/AstE_fam"/>
</dbReference>
<dbReference type="InterPro" id="IPR055438">
    <property type="entry name" value="AstE_AspA_cat"/>
</dbReference>
<dbReference type="InterPro" id="IPR007036">
    <property type="entry name" value="Aste_AspA_hybrid_dom"/>
</dbReference>
<dbReference type="InterPro" id="IPR016681">
    <property type="entry name" value="SuccinylGlu_desuccinylase"/>
</dbReference>
<dbReference type="NCBIfam" id="TIGR03242">
    <property type="entry name" value="arg_catab_astE"/>
    <property type="match status" value="1"/>
</dbReference>
<dbReference type="NCBIfam" id="NF003706">
    <property type="entry name" value="PRK05324.1"/>
    <property type="match status" value="1"/>
</dbReference>
<dbReference type="PANTHER" id="PTHR15162">
    <property type="entry name" value="ASPARTOACYLASE"/>
    <property type="match status" value="1"/>
</dbReference>
<dbReference type="PANTHER" id="PTHR15162:SF7">
    <property type="entry name" value="SUCCINYLGLUTAMATE DESUCCINYLASE"/>
    <property type="match status" value="1"/>
</dbReference>
<dbReference type="Pfam" id="PF24827">
    <property type="entry name" value="AstE_AspA_cat"/>
    <property type="match status" value="1"/>
</dbReference>
<dbReference type="Pfam" id="PF04952">
    <property type="entry name" value="AstE_AspA_hybrid"/>
    <property type="match status" value="1"/>
</dbReference>
<dbReference type="PIRSF" id="PIRSF017020">
    <property type="entry name" value="AstE"/>
    <property type="match status" value="1"/>
</dbReference>
<dbReference type="SUPFAM" id="SSF53187">
    <property type="entry name" value="Zn-dependent exopeptidases"/>
    <property type="match status" value="1"/>
</dbReference>
<accession>B4TUC5</accession>